<feature type="chain" id="PRO_0000020842" description="PGA synthase CapB">
    <location>
        <begin position="1"/>
        <end position="393"/>
    </location>
</feature>
<feature type="splice variant" id="VSP_018777" description="In isoform 33-kDa." evidence="2">
    <location>
        <position position="96"/>
    </location>
</feature>
<feature type="sequence variant" description="In strain: IFO 3336.">
    <original>N</original>
    <variation>S</variation>
    <location>
        <position position="89"/>
    </location>
</feature>
<feature type="sequence variant" description="In strain: Asahikawa.">
    <original>L</original>
    <variation>F</variation>
    <location>
        <position position="139"/>
    </location>
</feature>
<feature type="sequence variant" description="In strain: IFO 16449.">
    <original>TT</original>
    <variation>QQ</variation>
    <location>
        <begin position="324"/>
        <end position="325"/>
    </location>
</feature>
<feature type="sequence variant" description="In strain: IFO 3336.">
    <original>R</original>
    <variation>S</variation>
    <location>
        <position position="360"/>
    </location>
</feature>
<feature type="sequence conflict" description="In Ref. 2; CAB07475." evidence="2" ref="2">
    <original>R</original>
    <variation>S</variation>
    <location>
        <position position="360"/>
    </location>
</feature>
<keyword id="KW-0024">Alternative initiation</keyword>
<keyword id="KW-0436">Ligase</keyword>
<keyword id="KW-1185">Reference proteome</keyword>
<protein>
    <recommendedName>
        <fullName>PGA synthase CapB</fullName>
        <ecNumber>6.3.2.-</ecNumber>
    </recommendedName>
    <alternativeName>
        <fullName>Gamma-polyglutamic acid synthase</fullName>
    </alternativeName>
</protein>
<comment type="function">
    <text evidence="1">Catalyzes the biosynthesis of PGA (gamma-polyglutamic acid) from L-glutamate. Both the 44-kDa and the 33-kDa forms are required for PGA synthesis.</text>
</comment>
<comment type="cofactor">
    <cofactor>
        <name>Mn(2+)</name>
        <dbReference type="ChEBI" id="CHEBI:29035"/>
    </cofactor>
</comment>
<comment type="alternative products">
    <event type="alternative initiation"/>
    <isoform>
        <id>P96736-1</id>
        <name>44-kDa</name>
        <sequence type="displayed"/>
    </isoform>
    <isoform>
        <id>P96736-2</id>
        <name>33-kDa</name>
        <sequence type="described" ref="VSP_018777"/>
    </isoform>
</comment>
<comment type="disruption phenotype">
    <text evidence="1">Cells do not produce PGA.</text>
</comment>
<sequence length="393" mass="44017">MWLLIIACAVILVIGILEKRRHQKNIDALPVRVNINGIRGKSTVTRLTTGILIEAGYKTVGKTTGTDARMIYWDTPEEKPIKRKPQGPNIGEQKEVMRETVERGANAIVSECMAVNPDYQIIFQEELLQANIGVIVNVLEDHMDVMGPTLDEIAEAFTATIPYNGHLVITDSEYTEFFKQKAKERNTKVIIADNSKITDEYLRKFEYMVFPDNASLALGVAQALGIDEETAFKGMLNAPPDPGAMRILPLISPSEPGHFVNGFAANDASSTLNIWKRVKEIGYPTDDPIIIMNCRADRVDRTQQFANDVLPYIEASELILIGETTEPIVKAYEEGKIPADKLHDLEYKSTDEIMELLKKRMHNRVIYGVGNIHGAAEPLIEKIHEYKVKQLVS</sequence>
<accession>P96736</accession>
<accession>P96735</accession>
<accession>Q798J2</accession>
<accession>Q798J3</accession>
<accession>Q9AJM3</accession>
<accession>Q9FAF4</accession>
<accession>Q9R9J3</accession>
<name>CAPB_BACSU</name>
<evidence type="ECO:0000269" key="1">
    <source>
    </source>
</evidence>
<evidence type="ECO:0000305" key="2"/>
<organism>
    <name type="scientific">Bacillus subtilis (strain 168)</name>
    <dbReference type="NCBI Taxonomy" id="224308"/>
    <lineage>
        <taxon>Bacteria</taxon>
        <taxon>Bacillati</taxon>
        <taxon>Bacillota</taxon>
        <taxon>Bacilli</taxon>
        <taxon>Bacillales</taxon>
        <taxon>Bacillaceae</taxon>
        <taxon>Bacillus</taxon>
    </lineage>
</organism>
<gene>
    <name type="primary">capB</name>
    <name type="synonym">pgsB</name>
    <name type="synonym">ywsC</name>
    <name type="ordered locus">BSU35900</name>
</gene>
<reference key="1">
    <citation type="journal article" date="1997" name="Microbiology">
        <title>The Bacillus subtilis genome from gerBC (311 degrees) to licR (334 degrees).</title>
        <authorList>
            <person name="Presecan E."/>
            <person name="Moszer I."/>
            <person name="Boursier L."/>
            <person name="Cruz Ramos H."/>
            <person name="De La Fuente V."/>
            <person name="Hullo M.-F."/>
            <person name="Lelong C."/>
            <person name="Schleich S."/>
            <person name="Sekowska A."/>
            <person name="Song B.H."/>
            <person name="Villani G."/>
            <person name="Kunst F."/>
            <person name="Danchin A."/>
            <person name="Glaser P."/>
        </authorList>
    </citation>
    <scope>NUCLEOTIDE SEQUENCE [GENOMIC DNA]</scope>
    <source>
        <strain>168</strain>
    </source>
</reference>
<reference key="2">
    <citation type="journal article" date="1999" name="Biochem. Biophys. Res. Commun.">
        <title>A poly-gamma-glutamate synthetic system of Bacillus subtilis IFO 3336: gene cloning and biochemical analysis of poly-gammma-glutamate produced by Escherichia coli clone cells.</title>
        <authorList>
            <person name="Ashiuchi M."/>
            <person name="Soda K."/>
            <person name="Misono H."/>
        </authorList>
    </citation>
    <scope>NUCLEOTIDE SEQUENCE [GENOMIC DNA]</scope>
    <source>
        <strain>NBRC 3336</strain>
    </source>
</reference>
<reference key="3">
    <citation type="submission" date="2000-03" db="EMBL/GenBank/DDBJ databases">
        <title>Nucleotide sequence of the capBCA operon in Bacillus subtilis (natto).</title>
        <authorList>
            <person name="Tran L.P."/>
            <person name="Itoh Y."/>
        </authorList>
    </citation>
    <scope>NUCLEOTIDE SEQUENCE [GENOMIC DNA]</scope>
    <source>
        <strain>Asahikawa</strain>
    </source>
</reference>
<reference key="4">
    <citation type="journal article" date="2002" name="J. Bacteriol.">
        <title>Characterization of the Bacillus subtilis ywsC gene, involved in gamma-polyglutamic acid production.</title>
        <authorList>
            <person name="Urushibata Y."/>
            <person name="Tokuyama S."/>
            <person name="Tahara Y."/>
        </authorList>
    </citation>
    <scope>NUCLEOTIDE SEQUENCE [GENOMIC DNA]</scope>
    <scope>FUNCTION</scope>
    <scope>DISRUPTION PHENOTYPE</scope>
    <scope>ALTERNATIVE INITIATION</scope>
    <source>
        <strain>NBRC 16449</strain>
    </source>
</reference>
<reference key="5">
    <citation type="journal article" date="1997" name="Nature">
        <title>The complete genome sequence of the Gram-positive bacterium Bacillus subtilis.</title>
        <authorList>
            <person name="Kunst F."/>
            <person name="Ogasawara N."/>
            <person name="Moszer I."/>
            <person name="Albertini A.M."/>
            <person name="Alloni G."/>
            <person name="Azevedo V."/>
            <person name="Bertero M.G."/>
            <person name="Bessieres P."/>
            <person name="Bolotin A."/>
            <person name="Borchert S."/>
            <person name="Borriss R."/>
            <person name="Boursier L."/>
            <person name="Brans A."/>
            <person name="Braun M."/>
            <person name="Brignell S.C."/>
            <person name="Bron S."/>
            <person name="Brouillet S."/>
            <person name="Bruschi C.V."/>
            <person name="Caldwell B."/>
            <person name="Capuano V."/>
            <person name="Carter N.M."/>
            <person name="Choi S.-K."/>
            <person name="Codani J.-J."/>
            <person name="Connerton I.F."/>
            <person name="Cummings N.J."/>
            <person name="Daniel R.A."/>
            <person name="Denizot F."/>
            <person name="Devine K.M."/>
            <person name="Duesterhoeft A."/>
            <person name="Ehrlich S.D."/>
            <person name="Emmerson P.T."/>
            <person name="Entian K.-D."/>
            <person name="Errington J."/>
            <person name="Fabret C."/>
            <person name="Ferrari E."/>
            <person name="Foulger D."/>
            <person name="Fritz C."/>
            <person name="Fujita M."/>
            <person name="Fujita Y."/>
            <person name="Fuma S."/>
            <person name="Galizzi A."/>
            <person name="Galleron N."/>
            <person name="Ghim S.-Y."/>
            <person name="Glaser P."/>
            <person name="Goffeau A."/>
            <person name="Golightly E.J."/>
            <person name="Grandi G."/>
            <person name="Guiseppi G."/>
            <person name="Guy B.J."/>
            <person name="Haga K."/>
            <person name="Haiech J."/>
            <person name="Harwood C.R."/>
            <person name="Henaut A."/>
            <person name="Hilbert H."/>
            <person name="Holsappel S."/>
            <person name="Hosono S."/>
            <person name="Hullo M.-F."/>
            <person name="Itaya M."/>
            <person name="Jones L.-M."/>
            <person name="Joris B."/>
            <person name="Karamata D."/>
            <person name="Kasahara Y."/>
            <person name="Klaerr-Blanchard M."/>
            <person name="Klein C."/>
            <person name="Kobayashi Y."/>
            <person name="Koetter P."/>
            <person name="Koningstein G."/>
            <person name="Krogh S."/>
            <person name="Kumano M."/>
            <person name="Kurita K."/>
            <person name="Lapidus A."/>
            <person name="Lardinois S."/>
            <person name="Lauber J."/>
            <person name="Lazarevic V."/>
            <person name="Lee S.-M."/>
            <person name="Levine A."/>
            <person name="Liu H."/>
            <person name="Masuda S."/>
            <person name="Mauel C."/>
            <person name="Medigue C."/>
            <person name="Medina N."/>
            <person name="Mellado R.P."/>
            <person name="Mizuno M."/>
            <person name="Moestl D."/>
            <person name="Nakai S."/>
            <person name="Noback M."/>
            <person name="Noone D."/>
            <person name="O'Reilly M."/>
            <person name="Ogawa K."/>
            <person name="Ogiwara A."/>
            <person name="Oudega B."/>
            <person name="Park S.-H."/>
            <person name="Parro V."/>
            <person name="Pohl T.M."/>
            <person name="Portetelle D."/>
            <person name="Porwollik S."/>
            <person name="Prescott A.M."/>
            <person name="Presecan E."/>
            <person name="Pujic P."/>
            <person name="Purnelle B."/>
            <person name="Rapoport G."/>
            <person name="Rey M."/>
            <person name="Reynolds S."/>
            <person name="Rieger M."/>
            <person name="Rivolta C."/>
            <person name="Rocha E."/>
            <person name="Roche B."/>
            <person name="Rose M."/>
            <person name="Sadaie Y."/>
            <person name="Sato T."/>
            <person name="Scanlan E."/>
            <person name="Schleich S."/>
            <person name="Schroeter R."/>
            <person name="Scoffone F."/>
            <person name="Sekiguchi J."/>
            <person name="Sekowska A."/>
            <person name="Seror S.J."/>
            <person name="Serror P."/>
            <person name="Shin B.-S."/>
            <person name="Soldo B."/>
            <person name="Sorokin A."/>
            <person name="Tacconi E."/>
            <person name="Takagi T."/>
            <person name="Takahashi H."/>
            <person name="Takemaru K."/>
            <person name="Takeuchi M."/>
            <person name="Tamakoshi A."/>
            <person name="Tanaka T."/>
            <person name="Terpstra P."/>
            <person name="Tognoni A."/>
            <person name="Tosato V."/>
            <person name="Uchiyama S."/>
            <person name="Vandenbol M."/>
            <person name="Vannier F."/>
            <person name="Vassarotti A."/>
            <person name="Viari A."/>
            <person name="Wambutt R."/>
            <person name="Wedler E."/>
            <person name="Wedler H."/>
            <person name="Weitzenegger T."/>
            <person name="Winters P."/>
            <person name="Wipat A."/>
            <person name="Yamamoto H."/>
            <person name="Yamane K."/>
            <person name="Yasumoto K."/>
            <person name="Yata K."/>
            <person name="Yoshida K."/>
            <person name="Yoshikawa H.-F."/>
            <person name="Zumstein E."/>
            <person name="Yoshikawa H."/>
            <person name="Danchin A."/>
        </authorList>
    </citation>
    <scope>NUCLEOTIDE SEQUENCE [LARGE SCALE GENOMIC DNA]</scope>
    <source>
        <strain>168</strain>
    </source>
</reference>
<reference key="6">
    <citation type="journal article" date="2009" name="Microbiology">
        <title>From a consortium sequence to a unified sequence: the Bacillus subtilis 168 reference genome a decade later.</title>
        <authorList>
            <person name="Barbe V."/>
            <person name="Cruveiller S."/>
            <person name="Kunst F."/>
            <person name="Lenoble P."/>
            <person name="Meurice G."/>
            <person name="Sekowska A."/>
            <person name="Vallenet D."/>
            <person name="Wang T."/>
            <person name="Moszer I."/>
            <person name="Medigue C."/>
            <person name="Danchin A."/>
        </authorList>
    </citation>
    <scope>SEQUENCE REVISION TO 360</scope>
</reference>
<proteinExistence type="predicted"/>
<dbReference type="EC" id="6.3.2.-"/>
<dbReference type="EMBL" id="Z92953">
    <property type="protein sequence ID" value="CAB07466.1"/>
    <property type="molecule type" value="Genomic_DNA"/>
</dbReference>
<dbReference type="EMBL" id="Z92954">
    <property type="protein sequence ID" value="CAB07475.1"/>
    <property type="molecule type" value="Genomic_DNA"/>
</dbReference>
<dbReference type="EMBL" id="AB016245">
    <property type="protein sequence ID" value="BAA85263.1"/>
    <property type="molecule type" value="Genomic_DNA"/>
</dbReference>
<dbReference type="EMBL" id="AB039950">
    <property type="protein sequence ID" value="BAB13484.1"/>
    <property type="molecule type" value="Genomic_DNA"/>
</dbReference>
<dbReference type="EMBL" id="AB046355">
    <property type="protein sequence ID" value="BAB40948.1"/>
    <property type="molecule type" value="Genomic_DNA"/>
</dbReference>
<dbReference type="EMBL" id="AL009126">
    <property type="protein sequence ID" value="CAB15607.2"/>
    <property type="molecule type" value="Genomic_DNA"/>
</dbReference>
<dbReference type="PIR" id="F70069">
    <property type="entry name" value="F70069"/>
</dbReference>
<dbReference type="RefSeq" id="NP_391471.2">
    <molecule id="P96736-1"/>
    <property type="nucleotide sequence ID" value="NC_000964.3"/>
</dbReference>
<dbReference type="RefSeq" id="WP_003227883.1">
    <property type="nucleotide sequence ID" value="NZ_OZ025638.1"/>
</dbReference>
<dbReference type="SMR" id="P96736"/>
<dbReference type="FunCoup" id="P96736">
    <property type="interactions" value="3"/>
</dbReference>
<dbReference type="STRING" id="224308.BSU35900"/>
<dbReference type="PaxDb" id="224308-BSU35900"/>
<dbReference type="EnsemblBacteria" id="CAB15607">
    <property type="protein sequence ID" value="CAB15607"/>
    <property type="gene ID" value="BSU_35900"/>
</dbReference>
<dbReference type="GeneID" id="86871802"/>
<dbReference type="GeneID" id="936833"/>
<dbReference type="KEGG" id="bsu:BSU35900"/>
<dbReference type="PATRIC" id="fig|224308.179.peg.3886"/>
<dbReference type="eggNOG" id="COG0771">
    <property type="taxonomic scope" value="Bacteria"/>
</dbReference>
<dbReference type="InParanoid" id="P96736"/>
<dbReference type="OrthoDB" id="2884at2"/>
<dbReference type="BioCyc" id="BSUB:BSU35900-MONOMER"/>
<dbReference type="Proteomes" id="UP000001570">
    <property type="component" value="Chromosome"/>
</dbReference>
<dbReference type="GO" id="GO:0016020">
    <property type="term" value="C:membrane"/>
    <property type="evidence" value="ECO:0007669"/>
    <property type="project" value="InterPro"/>
</dbReference>
<dbReference type="GO" id="GO:0016881">
    <property type="term" value="F:acid-amino acid ligase activity"/>
    <property type="evidence" value="ECO:0007669"/>
    <property type="project" value="InterPro"/>
</dbReference>
<dbReference type="GO" id="GO:0005524">
    <property type="term" value="F:ATP binding"/>
    <property type="evidence" value="ECO:0007669"/>
    <property type="project" value="InterPro"/>
</dbReference>
<dbReference type="GO" id="GO:0045227">
    <property type="term" value="P:capsule polysaccharide biosynthetic process"/>
    <property type="evidence" value="ECO:0007669"/>
    <property type="project" value="InterPro"/>
</dbReference>
<dbReference type="Gene3D" id="3.40.1190.10">
    <property type="entry name" value="Mur-like, catalytic domain"/>
    <property type="match status" value="1"/>
</dbReference>
<dbReference type="InterPro" id="IPR008337">
    <property type="entry name" value="Capsule_biosynth_CapB"/>
</dbReference>
<dbReference type="InterPro" id="IPR036565">
    <property type="entry name" value="Mur-like_cat_sf"/>
</dbReference>
<dbReference type="InterPro" id="IPR013221">
    <property type="entry name" value="Mur_ligase_cen"/>
</dbReference>
<dbReference type="InterPro" id="IPR050061">
    <property type="entry name" value="MurCDEF_pg_biosynth"/>
</dbReference>
<dbReference type="NCBIfam" id="TIGR04012">
    <property type="entry name" value="poly_gGlu_PgsB"/>
    <property type="match status" value="1"/>
</dbReference>
<dbReference type="PANTHER" id="PTHR43445:SF1">
    <property type="entry name" value="PGA SYNTHASE CAPB"/>
    <property type="match status" value="1"/>
</dbReference>
<dbReference type="PANTHER" id="PTHR43445">
    <property type="entry name" value="UDP-N-ACETYLMURAMATE--L-ALANINE LIGASE-RELATED"/>
    <property type="match status" value="1"/>
</dbReference>
<dbReference type="Pfam" id="PF08245">
    <property type="entry name" value="Mur_ligase_M"/>
    <property type="match status" value="1"/>
</dbReference>
<dbReference type="PRINTS" id="PR01758">
    <property type="entry name" value="CAPSULEPROTB"/>
</dbReference>
<dbReference type="SUPFAM" id="SSF53623">
    <property type="entry name" value="MurD-like peptide ligases, catalytic domain"/>
    <property type="match status" value="1"/>
</dbReference>